<reference evidence="3" key="1">
    <citation type="journal article" date="2014" name="Peptides">
        <title>Echinometrin: A novel mast cell degranulating peptide from the coelomic liquid of Echinometra lucunter sea urchin.</title>
        <authorList>
            <person name="Sciani J.M."/>
            <person name="Sampaio M.C."/>
            <person name="Zychar B.C."/>
            <person name="de Camargo Goncalves L.R."/>
            <person name="Giorgi R."/>
            <person name="de Oliveira Nogueira T."/>
            <person name="de Melo R.L."/>
            <person name="de Fatima Pereira Teixeira C."/>
            <person name="Pimenta D.C."/>
        </authorList>
    </citation>
    <scope>PROTEIN SEQUENCE</scope>
    <scope>FUNCTION</scope>
    <scope>TISSUE SPECIFICITY</scope>
    <scope>MASS SPECTROMETRY</scope>
    <scope>SYNTHESIS</scope>
    <source>
        <tissue evidence="1">Coelomic fluid</tissue>
    </source>
</reference>
<sequence length="8" mass="1057">LRKLMLQR</sequence>
<keyword id="KW-0903">Direct protein sequencing</keyword>
<keyword id="KW-0467">Mast cell degranulation</keyword>
<keyword id="KW-0964">Secreted</keyword>
<dbReference type="GO" id="GO:0005576">
    <property type="term" value="C:extracellular region"/>
    <property type="evidence" value="ECO:0007669"/>
    <property type="project" value="UniProtKB-SubCell"/>
</dbReference>
<feature type="peptide" id="PRO_0000424422" description="Echinometrin" evidence="1">
    <location>
        <begin position="1"/>
        <end position="8"/>
    </location>
</feature>
<evidence type="ECO:0000269" key="1">
    <source>
    </source>
</evidence>
<evidence type="ECO:0000303" key="2">
    <source>
    </source>
</evidence>
<evidence type="ECO:0000305" key="3"/>
<evidence type="ECO:0000305" key="4">
    <source>
    </source>
</evidence>
<organism>
    <name type="scientific">Echinometra lucunter</name>
    <name type="common">Rock-boring urchin</name>
    <dbReference type="NCBI Taxonomy" id="105361"/>
    <lineage>
        <taxon>Eukaryota</taxon>
        <taxon>Metazoa</taxon>
        <taxon>Echinodermata</taxon>
        <taxon>Eleutherozoa</taxon>
        <taxon>Echinozoa</taxon>
        <taxon>Echinoidea</taxon>
        <taxon>Euechinoidea</taxon>
        <taxon>Echinacea</taxon>
        <taxon>Camarodonta</taxon>
        <taxon>Echinidea</taxon>
        <taxon>Echinometridae</taxon>
        <taxon>Echinometra</taxon>
    </lineage>
</organism>
<comment type="function">
    <text evidence="1">Pro-inflammatory agent which mediates the degranulation of mast cells thus evoking an inflammatory response. In vivo, when injected into rats, diminishes the pain threshold. Induces dose-dependent paw edema in mice.</text>
</comment>
<comment type="subcellular location">
    <subcellularLocation>
        <location evidence="4">Secreted</location>
        <location evidence="4">Extracellular space</location>
    </subcellularLocation>
</comment>
<comment type="tissue specificity">
    <text evidence="1">Detected in the coelomic fluid.</text>
</comment>
<comment type="mass spectrometry" mass="1056.591" error="0.006" method="Electrospray" evidence="1"/>
<comment type="miscellaneous">
    <text evidence="2">May be produced from vitellogenin or creatine kinase by limited proteolysis.</text>
</comment>
<comment type="miscellaneous">
    <text evidence="1">Does not induce hemolysis in human erythrocytes and has no antibacterial properties.</text>
</comment>
<accession>C0HJF1</accession>
<proteinExistence type="evidence at protein level"/>
<protein>
    <recommendedName>
        <fullName evidence="2">Echinometrin</fullName>
    </recommendedName>
</protein>
<name>ECHMN_ECHLU</name>